<keyword id="KW-0963">Cytoplasm</keyword>
<keyword id="KW-0378">Hydrolase</keyword>
<keyword id="KW-0540">Nuclease</keyword>
<keyword id="KW-0690">Ribosome biogenesis</keyword>
<gene>
    <name evidence="1" type="primary">yqgF</name>
    <name type="ordered locus">SPA2960</name>
</gene>
<name>YQGF_SALPA</name>
<accession>Q5PJJ7</accession>
<proteinExistence type="inferred from homology"/>
<protein>
    <recommendedName>
        <fullName evidence="1">Putative pre-16S rRNA nuclease</fullName>
        <ecNumber evidence="1">3.1.-.-</ecNumber>
    </recommendedName>
</protein>
<evidence type="ECO:0000255" key="1">
    <source>
        <dbReference type="HAMAP-Rule" id="MF_00651"/>
    </source>
</evidence>
<comment type="function">
    <text evidence="1">Could be a nuclease involved in processing of the 5'-end of pre-16S rRNA.</text>
</comment>
<comment type="subcellular location">
    <subcellularLocation>
        <location evidence="1">Cytoplasm</location>
    </subcellularLocation>
</comment>
<comment type="similarity">
    <text evidence="1">Belongs to the YqgF nuclease family.</text>
</comment>
<dbReference type="EC" id="3.1.-.-" evidence="1"/>
<dbReference type="EMBL" id="CP000026">
    <property type="protein sequence ID" value="AAV78798.1"/>
    <property type="molecule type" value="Genomic_DNA"/>
</dbReference>
<dbReference type="SMR" id="Q5PJJ7"/>
<dbReference type="KEGG" id="spt:SPA2960"/>
<dbReference type="HOGENOM" id="CLU_098240_3_0_6"/>
<dbReference type="Proteomes" id="UP000008185">
    <property type="component" value="Chromosome"/>
</dbReference>
<dbReference type="GO" id="GO:0005829">
    <property type="term" value="C:cytosol"/>
    <property type="evidence" value="ECO:0007669"/>
    <property type="project" value="TreeGrafter"/>
</dbReference>
<dbReference type="GO" id="GO:0004518">
    <property type="term" value="F:nuclease activity"/>
    <property type="evidence" value="ECO:0007669"/>
    <property type="project" value="UniProtKB-KW"/>
</dbReference>
<dbReference type="GO" id="GO:0000967">
    <property type="term" value="P:rRNA 5'-end processing"/>
    <property type="evidence" value="ECO:0007669"/>
    <property type="project" value="UniProtKB-UniRule"/>
</dbReference>
<dbReference type="CDD" id="cd16964">
    <property type="entry name" value="YqgF"/>
    <property type="match status" value="1"/>
</dbReference>
<dbReference type="FunFam" id="3.30.420.140:FF:000002">
    <property type="entry name" value="Putative pre-16S rRNA nuclease"/>
    <property type="match status" value="1"/>
</dbReference>
<dbReference type="Gene3D" id="3.30.420.140">
    <property type="entry name" value="YqgF/RNase H-like domain"/>
    <property type="match status" value="1"/>
</dbReference>
<dbReference type="HAMAP" id="MF_00651">
    <property type="entry name" value="Nuclease_YqgF"/>
    <property type="match status" value="1"/>
</dbReference>
<dbReference type="InterPro" id="IPR012337">
    <property type="entry name" value="RNaseH-like_sf"/>
</dbReference>
<dbReference type="InterPro" id="IPR005227">
    <property type="entry name" value="YqgF"/>
</dbReference>
<dbReference type="InterPro" id="IPR006641">
    <property type="entry name" value="YqgF/RNaseH-like_dom"/>
</dbReference>
<dbReference type="InterPro" id="IPR037027">
    <property type="entry name" value="YqgF/RNaseH-like_dom_sf"/>
</dbReference>
<dbReference type="NCBIfam" id="TIGR00250">
    <property type="entry name" value="RNAse_H_YqgF"/>
    <property type="match status" value="1"/>
</dbReference>
<dbReference type="PANTHER" id="PTHR33317">
    <property type="entry name" value="POLYNUCLEOTIDYL TRANSFERASE, RIBONUCLEASE H-LIKE SUPERFAMILY PROTEIN"/>
    <property type="match status" value="1"/>
</dbReference>
<dbReference type="PANTHER" id="PTHR33317:SF4">
    <property type="entry name" value="POLYNUCLEOTIDYL TRANSFERASE, RIBONUCLEASE H-LIKE SUPERFAMILY PROTEIN"/>
    <property type="match status" value="1"/>
</dbReference>
<dbReference type="Pfam" id="PF03652">
    <property type="entry name" value="RuvX"/>
    <property type="match status" value="1"/>
</dbReference>
<dbReference type="SMART" id="SM00732">
    <property type="entry name" value="YqgFc"/>
    <property type="match status" value="1"/>
</dbReference>
<dbReference type="SUPFAM" id="SSF53098">
    <property type="entry name" value="Ribonuclease H-like"/>
    <property type="match status" value="1"/>
</dbReference>
<organism>
    <name type="scientific">Salmonella paratyphi A (strain ATCC 9150 / SARB42)</name>
    <dbReference type="NCBI Taxonomy" id="295319"/>
    <lineage>
        <taxon>Bacteria</taxon>
        <taxon>Pseudomonadati</taxon>
        <taxon>Pseudomonadota</taxon>
        <taxon>Gammaproteobacteria</taxon>
        <taxon>Enterobacterales</taxon>
        <taxon>Enterobacteriaceae</taxon>
        <taxon>Salmonella</taxon>
    </lineage>
</organism>
<reference key="1">
    <citation type="journal article" date="2004" name="Nat. Genet.">
        <title>Comparison of genome degradation in Paratyphi A and Typhi, human-restricted serovars of Salmonella enterica that cause typhoid.</title>
        <authorList>
            <person name="McClelland M."/>
            <person name="Sanderson K.E."/>
            <person name="Clifton S.W."/>
            <person name="Latreille P."/>
            <person name="Porwollik S."/>
            <person name="Sabo A."/>
            <person name="Meyer R."/>
            <person name="Bieri T."/>
            <person name="Ozersky P."/>
            <person name="McLellan M."/>
            <person name="Harkins C.R."/>
            <person name="Wang C."/>
            <person name="Nguyen C."/>
            <person name="Berghoff A."/>
            <person name="Elliott G."/>
            <person name="Kohlberg S."/>
            <person name="Strong C."/>
            <person name="Du F."/>
            <person name="Carter J."/>
            <person name="Kremizki C."/>
            <person name="Layman D."/>
            <person name="Leonard S."/>
            <person name="Sun H."/>
            <person name="Fulton L."/>
            <person name="Nash W."/>
            <person name="Miner T."/>
            <person name="Minx P."/>
            <person name="Delehaunty K."/>
            <person name="Fronick C."/>
            <person name="Magrini V."/>
            <person name="Nhan M."/>
            <person name="Warren W."/>
            <person name="Florea L."/>
            <person name="Spieth J."/>
            <person name="Wilson R.K."/>
        </authorList>
    </citation>
    <scope>NUCLEOTIDE SEQUENCE [LARGE SCALE GENOMIC DNA]</scope>
    <source>
        <strain>ATCC 9150 / SARB42</strain>
    </source>
</reference>
<feature type="chain" id="PRO_0000172131" description="Putative pre-16S rRNA nuclease">
    <location>
        <begin position="1"/>
        <end position="138"/>
    </location>
</feature>
<sequence>MSDTLLAFDFGTKSIGVAIGQRITGTARPLPAIKAQDGTPDWTLIERLLKEWQPDEIIVGLPLNMDGTEQPLTARARKFANRIHGRFGVTVTLHDERLSTVEARSGLFERGGYRALNKGKVDSASAVIILESYFEQGY</sequence>